<proteinExistence type="inferred from homology"/>
<gene>
    <name evidence="1" type="primary">mtnD</name>
    <name type="ordered locus">PSPPH_1815</name>
</gene>
<feature type="chain" id="PRO_0000359223" description="Acireductone dioxygenase">
    <location>
        <begin position="1"/>
        <end position="181"/>
    </location>
</feature>
<feature type="binding site" evidence="1">
    <location>
        <position position="97"/>
    </location>
    <ligand>
        <name>Fe(2+)</name>
        <dbReference type="ChEBI" id="CHEBI:29033"/>
    </ligand>
</feature>
<feature type="binding site" evidence="1">
    <location>
        <position position="97"/>
    </location>
    <ligand>
        <name>Ni(2+)</name>
        <dbReference type="ChEBI" id="CHEBI:49786"/>
    </ligand>
</feature>
<feature type="binding site" evidence="1">
    <location>
        <position position="99"/>
    </location>
    <ligand>
        <name>Fe(2+)</name>
        <dbReference type="ChEBI" id="CHEBI:29033"/>
    </ligand>
</feature>
<feature type="binding site" evidence="1">
    <location>
        <position position="99"/>
    </location>
    <ligand>
        <name>Ni(2+)</name>
        <dbReference type="ChEBI" id="CHEBI:49786"/>
    </ligand>
</feature>
<feature type="binding site" evidence="1">
    <location>
        <position position="103"/>
    </location>
    <ligand>
        <name>Fe(2+)</name>
        <dbReference type="ChEBI" id="CHEBI:29033"/>
    </ligand>
</feature>
<feature type="binding site" evidence="1">
    <location>
        <position position="103"/>
    </location>
    <ligand>
        <name>Ni(2+)</name>
        <dbReference type="ChEBI" id="CHEBI:49786"/>
    </ligand>
</feature>
<feature type="binding site" evidence="1">
    <location>
        <position position="141"/>
    </location>
    <ligand>
        <name>Fe(2+)</name>
        <dbReference type="ChEBI" id="CHEBI:29033"/>
    </ligand>
</feature>
<feature type="binding site" evidence="1">
    <location>
        <position position="141"/>
    </location>
    <ligand>
        <name>Ni(2+)</name>
        <dbReference type="ChEBI" id="CHEBI:49786"/>
    </ligand>
</feature>
<feature type="site" description="May play a role in metal incorporation in vivo" evidence="1">
    <location>
        <position position="96"/>
    </location>
</feature>
<feature type="site" description="May play a role in transmitting local conformational changes" evidence="1">
    <location>
        <position position="102"/>
    </location>
</feature>
<feature type="site" description="Important to generate the dianion" evidence="1">
    <location>
        <position position="105"/>
    </location>
</feature>
<organism>
    <name type="scientific">Pseudomonas savastanoi pv. phaseolicola (strain 1448A / Race 6)</name>
    <name type="common">Pseudomonas syringae pv. phaseolicola (strain 1448A / Race 6)</name>
    <dbReference type="NCBI Taxonomy" id="264730"/>
    <lineage>
        <taxon>Bacteria</taxon>
        <taxon>Pseudomonadati</taxon>
        <taxon>Pseudomonadota</taxon>
        <taxon>Gammaproteobacteria</taxon>
        <taxon>Pseudomonadales</taxon>
        <taxon>Pseudomonadaceae</taxon>
        <taxon>Pseudomonas</taxon>
    </lineage>
</organism>
<name>MTND_PSE14</name>
<reference key="1">
    <citation type="journal article" date="2005" name="J. Bacteriol.">
        <title>Whole-genome sequence analysis of Pseudomonas syringae pv. phaseolicola 1448A reveals divergence among pathovars in genes involved in virulence and transposition.</title>
        <authorList>
            <person name="Joardar V."/>
            <person name="Lindeberg M."/>
            <person name="Jackson R.W."/>
            <person name="Selengut J."/>
            <person name="Dodson R."/>
            <person name="Brinkac L.M."/>
            <person name="Daugherty S.C."/>
            <person name="DeBoy R.T."/>
            <person name="Durkin A.S."/>
            <person name="Gwinn Giglio M."/>
            <person name="Madupu R."/>
            <person name="Nelson W.C."/>
            <person name="Rosovitz M.J."/>
            <person name="Sullivan S.A."/>
            <person name="Crabtree J."/>
            <person name="Creasy T."/>
            <person name="Davidsen T.M."/>
            <person name="Haft D.H."/>
            <person name="Zafar N."/>
            <person name="Zhou L."/>
            <person name="Halpin R."/>
            <person name="Holley T."/>
            <person name="Khouri H.M."/>
            <person name="Feldblyum T.V."/>
            <person name="White O."/>
            <person name="Fraser C.M."/>
            <person name="Chatterjee A.K."/>
            <person name="Cartinhour S."/>
            <person name="Schneider D."/>
            <person name="Mansfield J.W."/>
            <person name="Collmer A."/>
            <person name="Buell R."/>
        </authorList>
    </citation>
    <scope>NUCLEOTIDE SEQUENCE [LARGE SCALE GENOMIC DNA]</scope>
    <source>
        <strain>1448A / Race 6</strain>
    </source>
</reference>
<dbReference type="EC" id="1.13.11.54" evidence="1"/>
<dbReference type="EC" id="1.13.11.53" evidence="1"/>
<dbReference type="EMBL" id="CP000058">
    <property type="protein sequence ID" value="AAZ36012.1"/>
    <property type="molecule type" value="Genomic_DNA"/>
</dbReference>
<dbReference type="RefSeq" id="WP_011168229.1">
    <property type="nucleotide sequence ID" value="NC_005773.3"/>
</dbReference>
<dbReference type="SMR" id="Q48KM7"/>
<dbReference type="KEGG" id="psp:PSPPH_1815"/>
<dbReference type="eggNOG" id="COG1791">
    <property type="taxonomic scope" value="Bacteria"/>
</dbReference>
<dbReference type="HOGENOM" id="CLU_125400_0_0_6"/>
<dbReference type="UniPathway" id="UPA00904">
    <property type="reaction ID" value="UER00878"/>
</dbReference>
<dbReference type="Proteomes" id="UP000000551">
    <property type="component" value="Chromosome"/>
</dbReference>
<dbReference type="GO" id="GO:0010308">
    <property type="term" value="F:acireductone dioxygenase (Ni2+-requiring) activity"/>
    <property type="evidence" value="ECO:0007669"/>
    <property type="project" value="UniProtKB-UniRule"/>
</dbReference>
<dbReference type="GO" id="GO:0010309">
    <property type="term" value="F:acireductone dioxygenase [iron(II)-requiring] activity"/>
    <property type="evidence" value="ECO:0007669"/>
    <property type="project" value="UniProtKB-UniRule"/>
</dbReference>
<dbReference type="GO" id="GO:0005506">
    <property type="term" value="F:iron ion binding"/>
    <property type="evidence" value="ECO:0007669"/>
    <property type="project" value="UniProtKB-UniRule"/>
</dbReference>
<dbReference type="GO" id="GO:0016151">
    <property type="term" value="F:nickel cation binding"/>
    <property type="evidence" value="ECO:0007669"/>
    <property type="project" value="UniProtKB-UniRule"/>
</dbReference>
<dbReference type="GO" id="GO:0019509">
    <property type="term" value="P:L-methionine salvage from methylthioadenosine"/>
    <property type="evidence" value="ECO:0007669"/>
    <property type="project" value="UniProtKB-UniRule"/>
</dbReference>
<dbReference type="GO" id="GO:0019284">
    <property type="term" value="P:L-methionine salvage from S-adenosylmethionine"/>
    <property type="evidence" value="ECO:0007669"/>
    <property type="project" value="InterPro"/>
</dbReference>
<dbReference type="CDD" id="cd02232">
    <property type="entry name" value="cupin_ARD"/>
    <property type="match status" value="1"/>
</dbReference>
<dbReference type="Gene3D" id="2.60.120.10">
    <property type="entry name" value="Jelly Rolls"/>
    <property type="match status" value="1"/>
</dbReference>
<dbReference type="HAMAP" id="MF_01682">
    <property type="entry name" value="Salvage_MtnD"/>
    <property type="match status" value="1"/>
</dbReference>
<dbReference type="InterPro" id="IPR004313">
    <property type="entry name" value="ARD"/>
</dbReference>
<dbReference type="InterPro" id="IPR023956">
    <property type="entry name" value="ARD_bac"/>
</dbReference>
<dbReference type="InterPro" id="IPR014710">
    <property type="entry name" value="RmlC-like_jellyroll"/>
</dbReference>
<dbReference type="InterPro" id="IPR011051">
    <property type="entry name" value="RmlC_Cupin_sf"/>
</dbReference>
<dbReference type="PANTHER" id="PTHR23418">
    <property type="entry name" value="ACIREDUCTONE DIOXYGENASE"/>
    <property type="match status" value="1"/>
</dbReference>
<dbReference type="PANTHER" id="PTHR23418:SF0">
    <property type="entry name" value="ACIREDUCTONE DIOXYGENASE"/>
    <property type="match status" value="1"/>
</dbReference>
<dbReference type="Pfam" id="PF03079">
    <property type="entry name" value="ARD"/>
    <property type="match status" value="1"/>
</dbReference>
<dbReference type="SUPFAM" id="SSF51182">
    <property type="entry name" value="RmlC-like cupins"/>
    <property type="match status" value="1"/>
</dbReference>
<accession>Q48KM7</accession>
<keyword id="KW-0028">Amino-acid biosynthesis</keyword>
<keyword id="KW-0223">Dioxygenase</keyword>
<keyword id="KW-0408">Iron</keyword>
<keyword id="KW-0479">Metal-binding</keyword>
<keyword id="KW-0486">Methionine biosynthesis</keyword>
<keyword id="KW-0533">Nickel</keyword>
<keyword id="KW-0560">Oxidoreductase</keyword>
<protein>
    <recommendedName>
        <fullName evidence="1">Acireductone dioxygenase</fullName>
    </recommendedName>
    <alternativeName>
        <fullName evidence="1">1,2-dihydroxy-3-keto-5-methylthiopentene dioxygenase</fullName>
        <shortName evidence="1">DHK-MTPene dioxygenase</shortName>
    </alternativeName>
    <alternativeName>
        <fullName evidence="1">Acireductone dioxygenase (Fe(2+)-requiring)</fullName>
        <shortName evidence="1">ARD'</shortName>
        <shortName evidence="1">Fe-ARD</shortName>
        <ecNumber evidence="1">1.13.11.54</ecNumber>
    </alternativeName>
    <alternativeName>
        <fullName evidence="1">Acireductone dioxygenase (Ni(2+)-requiring)</fullName>
        <shortName evidence="1">ARD</shortName>
        <shortName evidence="1">Ni-ARD</shortName>
        <ecNumber evidence="1">1.13.11.53</ecNumber>
    </alternativeName>
</protein>
<comment type="function">
    <text evidence="1">Catalyzes 2 different reactions between oxygen and the acireductone 1,2-dihydroxy-3-keto-5-methylthiopentene (DHK-MTPene) depending upon the metal bound in the active site. Fe-containing acireductone dioxygenase (Fe-ARD) produces formate and 2-keto-4-methylthiobutyrate (KMTB), the alpha-ketoacid precursor of methionine in the methionine recycle pathway. Ni-containing acireductone dioxygenase (Ni-ARD) produces methylthiopropionate, carbon monoxide and formate, and does not lie on the methionine recycle pathway.</text>
</comment>
<comment type="catalytic activity">
    <reaction evidence="1">
        <text>1,2-dihydroxy-5-(methylsulfanyl)pent-1-en-3-one + O2 = 3-(methylsulfanyl)propanoate + CO + formate + 2 H(+)</text>
        <dbReference type="Rhea" id="RHEA:14161"/>
        <dbReference type="ChEBI" id="CHEBI:15378"/>
        <dbReference type="ChEBI" id="CHEBI:15379"/>
        <dbReference type="ChEBI" id="CHEBI:15740"/>
        <dbReference type="ChEBI" id="CHEBI:17245"/>
        <dbReference type="ChEBI" id="CHEBI:49016"/>
        <dbReference type="ChEBI" id="CHEBI:49252"/>
        <dbReference type="EC" id="1.13.11.53"/>
    </reaction>
</comment>
<comment type="catalytic activity">
    <reaction evidence="1">
        <text>1,2-dihydroxy-5-(methylsulfanyl)pent-1-en-3-one + O2 = 4-methylsulfanyl-2-oxobutanoate + formate + 2 H(+)</text>
        <dbReference type="Rhea" id="RHEA:24504"/>
        <dbReference type="ChEBI" id="CHEBI:15378"/>
        <dbReference type="ChEBI" id="CHEBI:15379"/>
        <dbReference type="ChEBI" id="CHEBI:15740"/>
        <dbReference type="ChEBI" id="CHEBI:16723"/>
        <dbReference type="ChEBI" id="CHEBI:49252"/>
        <dbReference type="EC" id="1.13.11.54"/>
    </reaction>
</comment>
<comment type="cofactor">
    <cofactor evidence="1">
        <name>Fe(2+)</name>
        <dbReference type="ChEBI" id="CHEBI:29033"/>
    </cofactor>
    <text evidence="1">Binds 1 Fe(2+) cation per monomer.</text>
</comment>
<comment type="cofactor">
    <cofactor evidence="1">
        <name>Ni(2+)</name>
        <dbReference type="ChEBI" id="CHEBI:49786"/>
    </cofactor>
    <text evidence="1">Binds 1 nickel ion per monomer.</text>
</comment>
<comment type="pathway">
    <text evidence="1">Amino-acid biosynthesis; L-methionine biosynthesis via salvage pathway; L-methionine from S-methyl-5-thio-alpha-D-ribose 1-phosphate: step 5/6.</text>
</comment>
<comment type="subunit">
    <text evidence="1">Monomer.</text>
</comment>
<comment type="similarity">
    <text evidence="1">Belongs to the acireductone dioxygenase (ARD) family.</text>
</comment>
<sequence>MSSLSVFHVSSPDTPNKVLTHLEDIASTLGEHGVAFDRWEAAAPITPGASQEEVISAYRTQIDKLMTEHGYVTVDVISLNSDHPQKAELRAKFLEEHRHGEDEVRFFVAGRGLFTLHIDDYVYAVMCEKNDLISVPAGTRHWFDMGENPHFVAIRLFNNPEGWVANFTGEDIAGRFPRLED</sequence>
<evidence type="ECO:0000255" key="1">
    <source>
        <dbReference type="HAMAP-Rule" id="MF_01682"/>
    </source>
</evidence>